<keyword id="KW-0064">Aspartyl protease</keyword>
<keyword id="KW-1003">Cell membrane</keyword>
<keyword id="KW-0378">Hydrolase</keyword>
<keyword id="KW-0472">Membrane</keyword>
<keyword id="KW-0645">Protease</keyword>
<keyword id="KW-0812">Transmembrane</keyword>
<keyword id="KW-1133">Transmembrane helix</keyword>
<evidence type="ECO:0000255" key="1">
    <source>
        <dbReference type="HAMAP-Rule" id="MF_00161"/>
    </source>
</evidence>
<feature type="chain" id="PRO_1000123484" description="Lipoprotein signal peptidase">
    <location>
        <begin position="1"/>
        <end position="152"/>
    </location>
</feature>
<feature type="transmembrane region" description="Helical" evidence="1">
    <location>
        <begin position="55"/>
        <end position="75"/>
    </location>
</feature>
<feature type="transmembrane region" description="Helical" evidence="1">
    <location>
        <begin position="85"/>
        <end position="105"/>
    </location>
</feature>
<feature type="transmembrane region" description="Helical" evidence="1">
    <location>
        <begin position="124"/>
        <end position="144"/>
    </location>
</feature>
<feature type="active site" evidence="1">
    <location>
        <position position="111"/>
    </location>
</feature>
<feature type="active site" evidence="1">
    <location>
        <position position="129"/>
    </location>
</feature>
<dbReference type="EC" id="3.4.23.36" evidence="1"/>
<dbReference type="EMBL" id="CP001407">
    <property type="protein sequence ID" value="ACO26019.1"/>
    <property type="molecule type" value="Genomic_DNA"/>
</dbReference>
<dbReference type="RefSeq" id="WP_000642181.1">
    <property type="nucleotide sequence ID" value="NZ_CP009318.1"/>
</dbReference>
<dbReference type="SMR" id="C1EPQ7"/>
<dbReference type="GeneID" id="45023722"/>
<dbReference type="KEGG" id="bcx:BCA_3997"/>
<dbReference type="PATRIC" id="fig|572264.18.peg.3950"/>
<dbReference type="UniPathway" id="UPA00665"/>
<dbReference type="Proteomes" id="UP000002210">
    <property type="component" value="Chromosome"/>
</dbReference>
<dbReference type="GO" id="GO:0005886">
    <property type="term" value="C:plasma membrane"/>
    <property type="evidence" value="ECO:0007669"/>
    <property type="project" value="UniProtKB-SubCell"/>
</dbReference>
<dbReference type="GO" id="GO:0004190">
    <property type="term" value="F:aspartic-type endopeptidase activity"/>
    <property type="evidence" value="ECO:0007669"/>
    <property type="project" value="UniProtKB-UniRule"/>
</dbReference>
<dbReference type="GO" id="GO:0006508">
    <property type="term" value="P:proteolysis"/>
    <property type="evidence" value="ECO:0007669"/>
    <property type="project" value="UniProtKB-KW"/>
</dbReference>
<dbReference type="HAMAP" id="MF_00161">
    <property type="entry name" value="LspA"/>
    <property type="match status" value="1"/>
</dbReference>
<dbReference type="InterPro" id="IPR001872">
    <property type="entry name" value="Peptidase_A8"/>
</dbReference>
<dbReference type="NCBIfam" id="TIGR00077">
    <property type="entry name" value="lspA"/>
    <property type="match status" value="1"/>
</dbReference>
<dbReference type="PANTHER" id="PTHR33695">
    <property type="entry name" value="LIPOPROTEIN SIGNAL PEPTIDASE"/>
    <property type="match status" value="1"/>
</dbReference>
<dbReference type="PANTHER" id="PTHR33695:SF1">
    <property type="entry name" value="LIPOPROTEIN SIGNAL PEPTIDASE"/>
    <property type="match status" value="1"/>
</dbReference>
<dbReference type="Pfam" id="PF01252">
    <property type="entry name" value="Peptidase_A8"/>
    <property type="match status" value="1"/>
</dbReference>
<dbReference type="PRINTS" id="PR00781">
    <property type="entry name" value="LIPOSIGPTASE"/>
</dbReference>
<dbReference type="PROSITE" id="PS00855">
    <property type="entry name" value="SPASE_II"/>
    <property type="match status" value="1"/>
</dbReference>
<proteinExistence type="inferred from homology"/>
<comment type="function">
    <text evidence="1">This protein specifically catalyzes the removal of signal peptides from prolipoproteins.</text>
</comment>
<comment type="catalytic activity">
    <reaction evidence="1">
        <text>Release of signal peptides from bacterial membrane prolipoproteins. Hydrolyzes -Xaa-Yaa-Zaa-|-(S,diacylglyceryl)Cys-, in which Xaa is hydrophobic (preferably Leu), and Yaa (Ala or Ser) and Zaa (Gly or Ala) have small, neutral side chains.</text>
        <dbReference type="EC" id="3.4.23.36"/>
    </reaction>
</comment>
<comment type="pathway">
    <text evidence="1">Protein modification; lipoprotein biosynthesis (signal peptide cleavage).</text>
</comment>
<comment type="subcellular location">
    <subcellularLocation>
        <location evidence="1">Cell membrane</location>
        <topology evidence="1">Multi-pass membrane protein</topology>
    </subcellularLocation>
</comment>
<comment type="similarity">
    <text evidence="1">Belongs to the peptidase A8 family.</text>
</comment>
<name>LSPA_BACC3</name>
<protein>
    <recommendedName>
        <fullName evidence="1">Lipoprotein signal peptidase</fullName>
        <ecNumber evidence="1">3.4.23.36</ecNumber>
    </recommendedName>
    <alternativeName>
        <fullName evidence="1">Prolipoprotein signal peptidase</fullName>
    </alternativeName>
    <alternativeName>
        <fullName evidence="1">Signal peptidase II</fullName>
        <shortName evidence="1">SPase II</shortName>
    </alternativeName>
</protein>
<organism>
    <name type="scientific">Bacillus cereus (strain 03BB102)</name>
    <dbReference type="NCBI Taxonomy" id="572264"/>
    <lineage>
        <taxon>Bacteria</taxon>
        <taxon>Bacillati</taxon>
        <taxon>Bacillota</taxon>
        <taxon>Bacilli</taxon>
        <taxon>Bacillales</taxon>
        <taxon>Bacillaceae</taxon>
        <taxon>Bacillus</taxon>
        <taxon>Bacillus cereus group</taxon>
    </lineage>
</organism>
<accession>C1EPQ7</accession>
<reference key="1">
    <citation type="submission" date="2009-02" db="EMBL/GenBank/DDBJ databases">
        <title>Genome sequence of Bacillus cereus 03BB102.</title>
        <authorList>
            <person name="Dodson R.J."/>
            <person name="Jackson P."/>
            <person name="Munk A.C."/>
            <person name="Brettin T."/>
            <person name="Bruce D."/>
            <person name="Detter C."/>
            <person name="Tapia R."/>
            <person name="Han C."/>
            <person name="Sutton G."/>
            <person name="Sims D."/>
        </authorList>
    </citation>
    <scope>NUCLEOTIDE SEQUENCE [LARGE SCALE GENOMIC DNA]</scope>
    <source>
        <strain>03BB102</strain>
    </source>
</reference>
<sequence length="152" mass="17454">MIYYVIALFVIAIDQISKWLIVKNMELGTSIPIIDNVLYITSHRNRGAAWGILENKMWFFYIITVVFVVFIVFYMKKYAKTDKLLGISLGLILGGAIGNFIDRVFRQEVVDFIHVYIFSYNYPVFNIADSALCIGVVLIIIQTLLEGKKTKE</sequence>
<gene>
    <name evidence="1" type="primary">lspA</name>
    <name type="ordered locus">BCA_3997</name>
</gene>